<accession>O83424</accession>
<comment type="caution">
    <text evidence="1">Could be the product of a pseudogene. It is encoded in the reverse strand of the region coding for TP_0409.1, a potential gene which belongs to the UPF0092 family.</text>
</comment>
<protein>
    <recommendedName>
        <fullName>Putative uncharacterized protein TP_0409</fullName>
    </recommendedName>
</protein>
<feature type="chain" id="PRO_0000202249" description="Putative uncharacterized protein TP_0409">
    <location>
        <begin position="1"/>
        <end position="61"/>
    </location>
</feature>
<name>Y409_TREPA</name>
<evidence type="ECO:0000305" key="1"/>
<keyword id="KW-1185">Reference proteome</keyword>
<gene>
    <name type="ordered locus">TP_0409</name>
</gene>
<reference key="1">
    <citation type="journal article" date="1998" name="Science">
        <title>Complete genome sequence of Treponema pallidum, the syphilis spirochete.</title>
        <authorList>
            <person name="Fraser C.M."/>
            <person name="Norris S.J."/>
            <person name="Weinstock G.M."/>
            <person name="White O."/>
            <person name="Sutton G.G."/>
            <person name="Dodson R.J."/>
            <person name="Gwinn M.L."/>
            <person name="Hickey E.K."/>
            <person name="Clayton R.A."/>
            <person name="Ketchum K.A."/>
            <person name="Sodergren E."/>
            <person name="Hardham J.M."/>
            <person name="McLeod M.P."/>
            <person name="Salzberg S.L."/>
            <person name="Peterson J.D."/>
            <person name="Khalak H.G."/>
            <person name="Richardson D.L."/>
            <person name="Howell J.K."/>
            <person name="Chidambaram M."/>
            <person name="Utterback T.R."/>
            <person name="McDonald L.A."/>
            <person name="Artiach P."/>
            <person name="Bowman C."/>
            <person name="Cotton M.D."/>
            <person name="Fujii C."/>
            <person name="Garland S.A."/>
            <person name="Hatch B."/>
            <person name="Horst K."/>
            <person name="Roberts K.M."/>
            <person name="Sandusky M."/>
            <person name="Weidman J.F."/>
            <person name="Smith H.O."/>
            <person name="Venter J.C."/>
        </authorList>
    </citation>
    <scope>NUCLEOTIDE SEQUENCE [LARGE SCALE GENOMIC DNA]</scope>
    <source>
        <strain>Nichols</strain>
    </source>
</reference>
<proteinExistence type="uncertain"/>
<dbReference type="EMBL" id="AE000520">
    <property type="protein sequence ID" value="AAC65397.1"/>
    <property type="molecule type" value="Genomic_DNA"/>
</dbReference>
<dbReference type="PIR" id="H71329">
    <property type="entry name" value="H71329"/>
</dbReference>
<dbReference type="IntAct" id="O83424">
    <property type="interactions" value="11"/>
</dbReference>
<dbReference type="STRING" id="243276.TP_0409"/>
<dbReference type="EnsemblBacteria" id="AAC65397">
    <property type="protein sequence ID" value="AAC65397"/>
    <property type="gene ID" value="TP_0409"/>
</dbReference>
<dbReference type="KEGG" id="tpa:TP_0409"/>
<dbReference type="KEGG" id="tpw:TPANIC_0409"/>
<dbReference type="HOGENOM" id="CLU_2921413_0_0_12"/>
<dbReference type="Proteomes" id="UP000000811">
    <property type="component" value="Chromosome"/>
</dbReference>
<organism>
    <name type="scientific">Treponema pallidum (strain Nichols)</name>
    <dbReference type="NCBI Taxonomy" id="243276"/>
    <lineage>
        <taxon>Bacteria</taxon>
        <taxon>Pseudomonadati</taxon>
        <taxon>Spirochaetota</taxon>
        <taxon>Spirochaetia</taxon>
        <taxon>Spirochaetales</taxon>
        <taxon>Treponemataceae</taxon>
        <taxon>Treponema</taxon>
    </lineage>
</organism>
<sequence length="61" mass="7158">MIDWIVFFALAWGRARVSCALKDENNAPSNSFANHYGERWLDPTARYRRRMSDLLPFCFCA</sequence>